<keyword id="KW-0446">Lipid-binding</keyword>
<keyword id="KW-0472">Membrane</keyword>
<keyword id="KW-0496">Mitochondrion</keyword>
<keyword id="KW-0999">Mitochondrion inner membrane</keyword>
<keyword id="KW-1185">Reference proteome</keyword>
<keyword id="KW-0809">Transit peptide</keyword>
<keyword id="KW-0831">Ubiquinone biosynthesis</keyword>
<evidence type="ECO:0000250" key="1">
    <source>
        <dbReference type="UniProtKB" id="O75208"/>
    </source>
</evidence>
<evidence type="ECO:0000255" key="2"/>
<evidence type="ECO:0000269" key="3">
    <source>
    </source>
</evidence>
<evidence type="ECO:0000269" key="4">
    <source>
    </source>
</evidence>
<evidence type="ECO:0000269" key="5">
    <source>
    </source>
</evidence>
<evidence type="ECO:0000269" key="6">
    <source>
    </source>
</evidence>
<evidence type="ECO:0000269" key="7">
    <source>
    </source>
</evidence>
<evidence type="ECO:0000305" key="8"/>
<name>COQ9_YEAST</name>
<accession>Q05779</accession>
<accession>D6VYK3</accession>
<reference key="1">
    <citation type="journal article" date="1997" name="Nature">
        <title>The nucleotide sequence of Saccharomyces cerevisiae chromosome XII.</title>
        <authorList>
            <person name="Johnston M."/>
            <person name="Hillier L.W."/>
            <person name="Riles L."/>
            <person name="Albermann K."/>
            <person name="Andre B."/>
            <person name="Ansorge W."/>
            <person name="Benes V."/>
            <person name="Brueckner M."/>
            <person name="Delius H."/>
            <person name="Dubois E."/>
            <person name="Duesterhoeft A."/>
            <person name="Entian K.-D."/>
            <person name="Floeth M."/>
            <person name="Goffeau A."/>
            <person name="Hebling U."/>
            <person name="Heumann K."/>
            <person name="Heuss-Neitzel D."/>
            <person name="Hilbert H."/>
            <person name="Hilger F."/>
            <person name="Kleine K."/>
            <person name="Koetter P."/>
            <person name="Louis E.J."/>
            <person name="Messenguy F."/>
            <person name="Mewes H.-W."/>
            <person name="Miosga T."/>
            <person name="Moestl D."/>
            <person name="Mueller-Auer S."/>
            <person name="Nentwich U."/>
            <person name="Obermaier B."/>
            <person name="Piravandi E."/>
            <person name="Pohl T.M."/>
            <person name="Portetelle D."/>
            <person name="Purnelle B."/>
            <person name="Rechmann S."/>
            <person name="Rieger M."/>
            <person name="Rinke M."/>
            <person name="Rose M."/>
            <person name="Scharfe M."/>
            <person name="Scherens B."/>
            <person name="Scholler P."/>
            <person name="Schwager C."/>
            <person name="Schwarz S."/>
            <person name="Underwood A.P."/>
            <person name="Urrestarazu L.A."/>
            <person name="Vandenbol M."/>
            <person name="Verhasselt P."/>
            <person name="Vierendeels F."/>
            <person name="Voet M."/>
            <person name="Volckaert G."/>
            <person name="Voss H."/>
            <person name="Wambutt R."/>
            <person name="Wedler E."/>
            <person name="Wedler H."/>
            <person name="Zimmermann F.K."/>
            <person name="Zollner A."/>
            <person name="Hani J."/>
            <person name="Hoheisel J.D."/>
        </authorList>
    </citation>
    <scope>NUCLEOTIDE SEQUENCE [LARGE SCALE GENOMIC DNA]</scope>
    <source>
        <strain>ATCC 204508 / S288c</strain>
    </source>
</reference>
<reference key="2">
    <citation type="journal article" date="2014" name="G3 (Bethesda)">
        <title>The reference genome sequence of Saccharomyces cerevisiae: Then and now.</title>
        <authorList>
            <person name="Engel S.R."/>
            <person name="Dietrich F.S."/>
            <person name="Fisk D.G."/>
            <person name="Binkley G."/>
            <person name="Balakrishnan R."/>
            <person name="Costanzo M.C."/>
            <person name="Dwight S.S."/>
            <person name="Hitz B.C."/>
            <person name="Karra K."/>
            <person name="Nash R.S."/>
            <person name="Weng S."/>
            <person name="Wong E.D."/>
            <person name="Lloyd P."/>
            <person name="Skrzypek M.S."/>
            <person name="Miyasato S.R."/>
            <person name="Simison M."/>
            <person name="Cherry J.M."/>
        </authorList>
    </citation>
    <scope>GENOME REANNOTATION</scope>
    <source>
        <strain>ATCC 204508 / S288c</strain>
    </source>
</reference>
<reference key="3">
    <citation type="journal article" date="2003" name="Nature">
        <title>Global analysis of protein localization in budding yeast.</title>
        <authorList>
            <person name="Huh W.-K."/>
            <person name="Falvo J.V."/>
            <person name="Gerke L.C."/>
            <person name="Carroll A.S."/>
            <person name="Howson R.W."/>
            <person name="Weissman J.S."/>
            <person name="O'Shea E.K."/>
        </authorList>
    </citation>
    <scope>SUBCELLULAR LOCATION [LARGE SCALE ANALYSIS]</scope>
</reference>
<reference key="4">
    <citation type="journal article" date="2003" name="Nature">
        <title>Global analysis of protein expression in yeast.</title>
        <authorList>
            <person name="Ghaemmaghami S."/>
            <person name="Huh W.-K."/>
            <person name="Bower K."/>
            <person name="Howson R.W."/>
            <person name="Belle A."/>
            <person name="Dephoure N."/>
            <person name="O'Shea E.K."/>
            <person name="Weissman J.S."/>
        </authorList>
    </citation>
    <scope>LEVEL OF PROTEIN EXPRESSION [LARGE SCALE ANALYSIS]</scope>
</reference>
<reference key="5">
    <citation type="journal article" date="2003" name="Proc. Natl. Acad. Sci. U.S.A.">
        <title>The proteome of Saccharomyces cerevisiae mitochondria.</title>
        <authorList>
            <person name="Sickmann A."/>
            <person name="Reinders J."/>
            <person name="Wagner Y."/>
            <person name="Joppich C."/>
            <person name="Zahedi R.P."/>
            <person name="Meyer H.E."/>
            <person name="Schoenfisch B."/>
            <person name="Perschil I."/>
            <person name="Chacinska A."/>
            <person name="Guiard B."/>
            <person name="Rehling P."/>
            <person name="Pfanner N."/>
            <person name="Meisinger C."/>
        </authorList>
    </citation>
    <scope>SUBCELLULAR LOCATION [LARGE SCALE ANALYSIS]</scope>
    <source>
        <strain>ATCC 76625 / YPH499</strain>
    </source>
</reference>
<reference key="6">
    <citation type="journal article" date="2005" name="J. Biol. Chem.">
        <title>COQ9, a new gene required for the biosynthesis of coenzyme Q in Saccharomyces cerevisiae.</title>
        <authorList>
            <person name="Johnson A."/>
            <person name="Gin P."/>
            <person name="Marbois B.N."/>
            <person name="Hsieh E.J."/>
            <person name="Wu M."/>
            <person name="Barros M.H."/>
            <person name="Clarke C.F."/>
            <person name="Tzagoloff A."/>
        </authorList>
    </citation>
    <scope>FUNCTION</scope>
    <scope>SUBCELLULAR LOCATION</scope>
</reference>
<reference key="7">
    <citation type="journal article" date="2014" name="Proc. Natl. Acad. Sci. U.S.A.">
        <title>Mitochondrial COQ9 is a lipid-binding protein that associates with COQ7 to enable coenzyme Q biosynthesis.</title>
        <authorList>
            <person name="Lohman D.C."/>
            <person name="Forouhar F."/>
            <person name="Beebe E.T."/>
            <person name="Stefely M.S."/>
            <person name="Minogue C.E."/>
            <person name="Ulbrich A."/>
            <person name="Stefely J.A."/>
            <person name="Sukumar S."/>
            <person name="Luna-Sanchez M."/>
            <person name="Jochem A."/>
            <person name="Lew S."/>
            <person name="Seetharaman J."/>
            <person name="Xiao R."/>
            <person name="Wang H."/>
            <person name="Westphall M.S."/>
            <person name="Wrobel R.L."/>
            <person name="Everett J.K."/>
            <person name="Mitchell J.C."/>
            <person name="Lopez L.C."/>
            <person name="Coon J.J."/>
            <person name="Tong L."/>
            <person name="Pagliarini D.J."/>
        </authorList>
    </citation>
    <scope>FUNCTION</scope>
    <scope>PATHWAY</scope>
    <scope>MUTAGENESIS OF LEU-135; MET-174; ASP-185; TRP-188; TYR-189 AND LEU-204</scope>
</reference>
<proteinExistence type="evidence at protein level"/>
<comment type="function">
    <text evidence="1 6 7">Membrane-associated protein that warps the membrane surface to access and bind aromatic isoprenes with high specificity, including ubiquinone (CoQ) isoprene intermediates and presents them directly to COQ7, therefore facilitating the COQ7-mediated hydroxylase step (By similarity). Participates in the biosynthesis of coenzyme Q, also named ubiquinone, an essential lipid-soluble electron transporter for aerobic cellular respiration (PubMed:16027161, PubMed:25339443).</text>
</comment>
<comment type="pathway">
    <text evidence="7">Cofactor biosynthesis; ubiquinone biosynthesis.</text>
</comment>
<comment type="subcellular location">
    <subcellularLocation>
        <location evidence="3 5 6">Mitochondrion inner membrane</location>
        <topology evidence="3 5 6">Peripheral membrane protein</topology>
        <orientation evidence="3 5 6">Matrix side</orientation>
    </subcellularLocation>
</comment>
<comment type="miscellaneous">
    <text evidence="4">Present with 3420 molecules/cell in log phase SD medium.</text>
</comment>
<comment type="similarity">
    <text evidence="8">Belongs to the COQ9 family.</text>
</comment>
<gene>
    <name type="primary">COQ9</name>
    <name type="ordered locus">YLR201C</name>
</gene>
<feature type="transit peptide" description="Mitochondrion" evidence="2">
    <location>
        <begin position="1"/>
        <end status="unknown"/>
    </location>
</feature>
<feature type="chain" id="PRO_0000227686" description="Ubiquinone biosynthesis protein COQ9, mitochondrial">
    <location>
        <begin status="unknown"/>
        <end position="260"/>
    </location>
</feature>
<feature type="binding site" evidence="1">
    <location>
        <begin position="189"/>
        <end position="192"/>
    </location>
    <ligand>
        <name>a 1,2-diacylglycero-3-phosphoethanolamine</name>
        <dbReference type="ChEBI" id="CHEBI:57613"/>
    </ligand>
</feature>
<feature type="mutagenesis site" description="Inability to grow on nonfermentable carbon sources." evidence="7">
    <original>L</original>
    <variation>E</variation>
    <variation>K</variation>
    <location>
        <position position="135"/>
    </location>
</feature>
<feature type="mutagenesis site" description="Impaired ability to grow on nonfermentable carbon sources." evidence="7">
    <original>M</original>
    <variation>E</variation>
    <location>
        <position position="174"/>
    </location>
</feature>
<feature type="mutagenesis site" description="Inability to grow on nonfermentable carbon sources." evidence="7">
    <original>D</original>
    <variation>K</variation>
    <location>
        <position position="185"/>
    </location>
</feature>
<feature type="mutagenesis site" description="Inability to grow on nonfermentable carbon sources." evidence="7">
    <original>W</original>
    <variation>K</variation>
    <location>
        <position position="188"/>
    </location>
</feature>
<feature type="mutagenesis site" description="Impaired ability to grow on nonfermentable carbon sources." evidence="7">
    <original>Y</original>
    <variation>D</variation>
    <variation>K</variation>
    <location>
        <position position="189"/>
    </location>
</feature>
<feature type="mutagenesis site" description="Impaired ability to grow on nonfermentable carbon sources." evidence="7">
    <original>L</original>
    <variation>K</variation>
    <location>
        <position position="204"/>
    </location>
</feature>
<dbReference type="EMBL" id="U14913">
    <property type="protein sequence ID" value="AAB67447.1"/>
    <property type="molecule type" value="Genomic_DNA"/>
</dbReference>
<dbReference type="EMBL" id="BK006945">
    <property type="protein sequence ID" value="DAA09519.1"/>
    <property type="molecule type" value="Genomic_DNA"/>
</dbReference>
<dbReference type="PIR" id="S48553">
    <property type="entry name" value="S48553"/>
</dbReference>
<dbReference type="RefSeq" id="NP_013302.1">
    <property type="nucleotide sequence ID" value="NM_001182088.1"/>
</dbReference>
<dbReference type="SMR" id="Q05779"/>
<dbReference type="BioGRID" id="31470">
    <property type="interactions" value="202"/>
</dbReference>
<dbReference type="ComplexPortal" id="CPX-1155">
    <property type="entry name" value="CoQ biosynthetic complex"/>
</dbReference>
<dbReference type="DIP" id="DIP-3854N"/>
<dbReference type="FunCoup" id="Q05779">
    <property type="interactions" value="304"/>
</dbReference>
<dbReference type="IntAct" id="Q05779">
    <property type="interactions" value="8"/>
</dbReference>
<dbReference type="STRING" id="4932.YLR201C"/>
<dbReference type="iPTMnet" id="Q05779"/>
<dbReference type="PaxDb" id="4932-YLR201C"/>
<dbReference type="PeptideAtlas" id="Q05779"/>
<dbReference type="DNASU" id="850898"/>
<dbReference type="EnsemblFungi" id="YLR201C_mRNA">
    <property type="protein sequence ID" value="YLR201C"/>
    <property type="gene ID" value="YLR201C"/>
</dbReference>
<dbReference type="GeneID" id="850898"/>
<dbReference type="KEGG" id="sce:YLR201C"/>
<dbReference type="AGR" id="SGD:S000004191"/>
<dbReference type="SGD" id="S000004191">
    <property type="gene designation" value="COQ9"/>
</dbReference>
<dbReference type="VEuPathDB" id="FungiDB:YLR201C"/>
<dbReference type="eggNOG" id="KOG2969">
    <property type="taxonomic scope" value="Eukaryota"/>
</dbReference>
<dbReference type="GeneTree" id="ENSGT00390000009328"/>
<dbReference type="HOGENOM" id="CLU_057411_1_1_1"/>
<dbReference type="InParanoid" id="Q05779"/>
<dbReference type="OMA" id="SELFMAQ"/>
<dbReference type="OrthoDB" id="619536at2759"/>
<dbReference type="BioCyc" id="YEAST:G3O-32321-MONOMER"/>
<dbReference type="Reactome" id="R-SCE-2142789">
    <property type="pathway name" value="Ubiquinol biosynthesis"/>
</dbReference>
<dbReference type="UniPathway" id="UPA00232"/>
<dbReference type="BioGRID-ORCS" id="850898">
    <property type="hits" value="0 hits in 10 CRISPR screens"/>
</dbReference>
<dbReference type="PRO" id="PR:Q05779"/>
<dbReference type="Proteomes" id="UP000002311">
    <property type="component" value="Chromosome XII"/>
</dbReference>
<dbReference type="RNAct" id="Q05779">
    <property type="molecule type" value="protein"/>
</dbReference>
<dbReference type="GO" id="GO:0005743">
    <property type="term" value="C:mitochondrial inner membrane"/>
    <property type="evidence" value="ECO:0000314"/>
    <property type="project" value="SGD"/>
</dbReference>
<dbReference type="GO" id="GO:0005739">
    <property type="term" value="C:mitochondrion"/>
    <property type="evidence" value="ECO:0007005"/>
    <property type="project" value="SGD"/>
</dbReference>
<dbReference type="GO" id="GO:0032991">
    <property type="term" value="C:protein-containing complex"/>
    <property type="evidence" value="ECO:0000314"/>
    <property type="project" value="UniProtKB"/>
</dbReference>
<dbReference type="GO" id="GO:0008289">
    <property type="term" value="F:lipid binding"/>
    <property type="evidence" value="ECO:0000318"/>
    <property type="project" value="GO_Central"/>
</dbReference>
<dbReference type="GO" id="GO:0006744">
    <property type="term" value="P:ubiquinone biosynthetic process"/>
    <property type="evidence" value="ECO:0000315"/>
    <property type="project" value="UniProtKB"/>
</dbReference>
<dbReference type="InterPro" id="IPR013718">
    <property type="entry name" value="COQ9_C"/>
</dbReference>
<dbReference type="InterPro" id="IPR012762">
    <property type="entry name" value="Ubiq_biosynth_COQ9"/>
</dbReference>
<dbReference type="NCBIfam" id="TIGR02396">
    <property type="entry name" value="diverge_rpsU"/>
    <property type="match status" value="1"/>
</dbReference>
<dbReference type="PANTHER" id="PTHR21427">
    <property type="entry name" value="UBIQUINONE BIOSYNTHESIS PROTEIN COQ9, MITOCHONDRIAL"/>
    <property type="match status" value="1"/>
</dbReference>
<dbReference type="PANTHER" id="PTHR21427:SF19">
    <property type="entry name" value="UBIQUINONE BIOSYNTHESIS PROTEIN COQ9, MITOCHONDRIAL"/>
    <property type="match status" value="1"/>
</dbReference>
<dbReference type="Pfam" id="PF08511">
    <property type="entry name" value="COQ9"/>
    <property type="match status" value="1"/>
</dbReference>
<organism>
    <name type="scientific">Saccharomyces cerevisiae (strain ATCC 204508 / S288c)</name>
    <name type="common">Baker's yeast</name>
    <dbReference type="NCBI Taxonomy" id="559292"/>
    <lineage>
        <taxon>Eukaryota</taxon>
        <taxon>Fungi</taxon>
        <taxon>Dikarya</taxon>
        <taxon>Ascomycota</taxon>
        <taxon>Saccharomycotina</taxon>
        <taxon>Saccharomycetes</taxon>
        <taxon>Saccharomycetales</taxon>
        <taxon>Saccharomycetaceae</taxon>
        <taxon>Saccharomyces</taxon>
    </lineage>
</organism>
<protein>
    <recommendedName>
        <fullName>Ubiquinone biosynthesis protein COQ9, mitochondrial</fullName>
    </recommendedName>
</protein>
<sequence length="260" mass="29958">MLCRNTARTGCKFFRLYHSNPIEHVKPIHIKPLTYGKESPQYKVLSLALQKFVPEHGFSERSIVESLNELGYPSSMISSIGAPNSPSFFHSSTAVMELIKFQLVDKRYRLTEGINPDVTPQYKLPSLEHLLLKRLEMDKPIGGHLSELMSQLAIPSAFLFETAIPELHRLSDDMIYFSNEKDHHDSAWYAKRLAVSSTYIGSKLFMAQDKSHNYKETFTFAKDKLHRVMRLGEYYNNTEEFAWYTLMSTVNLIKSQLVRG</sequence>